<comment type="function">
    <text evidence="2">Involved in the methylaspartate cycle. Catalyzes the reversible hydration of mesaconyl-CoA (2-methylfumaryl-CoA) to yield beta-methylmalyl-CoA ((2R,3S)-beta-methylmalyl-CoA).</text>
</comment>
<comment type="catalytic activity">
    <reaction evidence="5">
        <text>(2R,3S)-beta-methylmalyl-CoA = 2-methylfumaryl-CoA + H2O</text>
        <dbReference type="Rhea" id="RHEA:38263"/>
        <dbReference type="ChEBI" id="CHEBI:15377"/>
        <dbReference type="ChEBI" id="CHEBI:75634"/>
        <dbReference type="ChEBI" id="CHEBI:75635"/>
        <dbReference type="EC" id="4.2.1.148"/>
    </reaction>
    <physiologicalReaction direction="right-to-left" evidence="5">
        <dbReference type="Rhea" id="RHEA:38265"/>
    </physiologicalReaction>
</comment>
<comment type="similarity">
    <text evidence="4">Belongs to the enoyl-CoA hydratase/isomerase family.</text>
</comment>
<comment type="sequence caution" evidence="4">
    <conflict type="erroneous initiation">
        <sequence resource="EMBL-CDS" id="AAV45688"/>
    </conflict>
    <text>Extended N-terminus.</text>
</comment>
<reference key="1">
    <citation type="journal article" date="2004" name="Genome Res.">
        <title>Genome sequence of Haloarcula marismortui: a halophilic archaeon from the Dead Sea.</title>
        <authorList>
            <person name="Baliga N.S."/>
            <person name="Bonneau R."/>
            <person name="Facciotti M.T."/>
            <person name="Pan M."/>
            <person name="Glusman G."/>
            <person name="Deutsch E.W."/>
            <person name="Shannon P."/>
            <person name="Chiu Y."/>
            <person name="Weng R.S."/>
            <person name="Gan R.R."/>
            <person name="Hung P."/>
            <person name="Date S.V."/>
            <person name="Marcotte E."/>
            <person name="Hood L."/>
            <person name="Ng W.V."/>
        </authorList>
    </citation>
    <scope>NUCLEOTIDE SEQUENCE [LARGE SCALE GENOMIC DNA]</scope>
    <source>
        <strain>ATCC 43049 / DSM 3752 / JCM 8966 / VKM B-1809</strain>
    </source>
</reference>
<reference key="2">
    <citation type="journal article" date="2011" name="Science">
        <title>A methylaspartate cycle in haloarchaea.</title>
        <authorList>
            <person name="Khomyakova M."/>
            <person name="Bukmez O."/>
            <person name="Thomas L.K."/>
            <person name="Erb T.J."/>
            <person name="Berg I.A."/>
        </authorList>
    </citation>
    <scope>FUNCTION</scope>
    <scope>CATALYTIC ACTIVITY</scope>
    <source>
        <strain>ATCC 43049 / DSM 3752 / JCM 8966 / VKM B-1809</strain>
    </source>
</reference>
<evidence type="ECO:0000255" key="1"/>
<evidence type="ECO:0000269" key="2">
    <source>
    </source>
</evidence>
<evidence type="ECO:0000303" key="3">
    <source>
    </source>
</evidence>
<evidence type="ECO:0000305" key="4"/>
<evidence type="ECO:0000305" key="5">
    <source>
    </source>
</evidence>
<organism>
    <name type="scientific">Haloarcula marismortui (strain ATCC 43049 / DSM 3752 / JCM 8966 / VKM B-1809)</name>
    <name type="common">Halobacterium marismortui</name>
    <dbReference type="NCBI Taxonomy" id="272569"/>
    <lineage>
        <taxon>Archaea</taxon>
        <taxon>Methanobacteriati</taxon>
        <taxon>Methanobacteriota</taxon>
        <taxon>Stenosarchaea group</taxon>
        <taxon>Halobacteria</taxon>
        <taxon>Halobacteriales</taxon>
        <taxon>Haloarculaceae</taxon>
        <taxon>Haloarcula</taxon>
    </lineage>
</organism>
<sequence length="358" mass="39997">MTDWADPDALDLSDGETFDSLLDRADTREKGHFFEFFAEGDELAHDPGLRLTHHGSEQWMGQTLNHDPAYWRADTARERDFEERPVHPDYLLACVMGITVEDLSEKGGYFLGRDDVTFHQPVTAGTPLSVTSTVVDTKTSSSRPQYGIVTWETEGRDRETGETLVSYRRTNMIPRREPAATDGGAVGEQDEDGPMLPDTPISPDGEYFEDFQAALERADTENAAVAYRHERGRTMDDQLVAGLPLATLNTARQHHNRDEMADSPSGDIVAYGDVTRSVALAHARSDEATYRERRFADEQFHDFVTLGDTVYGFTRVLDCDPDAGPERAGAVTFEHVAFNQDQTPVYSGRRTALIQRDT</sequence>
<proteinExistence type="evidence at protein level"/>
<keyword id="KW-0456">Lyase</keyword>
<keyword id="KW-1185">Reference proteome</keyword>
<feature type="chain" id="PRO_0000429370" description="Mesaconyl-CoA hydratase">
    <location>
        <begin position="1"/>
        <end position="358"/>
    </location>
</feature>
<feature type="domain" description="MaoC-like" evidence="1">
    <location>
        <begin position="44"/>
        <end position="148"/>
    </location>
</feature>
<protein>
    <recommendedName>
        <fullName evidence="3">Mesaconyl-CoA hydratase</fullName>
        <ecNumber evidence="5">4.2.1.148</ecNumber>
    </recommendedName>
    <alternativeName>
        <fullName>2-methylfumaryl-CoA hydratase</fullName>
    </alternativeName>
    <alternativeName>
        <fullName>Beta-methylmalyl-CoA dehydratase</fullName>
    </alternativeName>
</protein>
<gene>
    <name evidence="3" type="primary">mch</name>
    <name type="ordered locus">rrnAC0688</name>
</gene>
<dbReference type="EC" id="4.2.1.148" evidence="5"/>
<dbReference type="EMBL" id="AY596297">
    <property type="protein sequence ID" value="AAV45688.1"/>
    <property type="status" value="ALT_INIT"/>
    <property type="molecule type" value="Genomic_DNA"/>
</dbReference>
<dbReference type="RefSeq" id="WP_049938818.1">
    <property type="nucleotide sequence ID" value="NC_006396.1"/>
</dbReference>
<dbReference type="SMR" id="Q5V464"/>
<dbReference type="STRING" id="272569.rrnAC0688"/>
<dbReference type="PaxDb" id="272569-rrnAC0688"/>
<dbReference type="EnsemblBacteria" id="AAV45688">
    <property type="protein sequence ID" value="AAV45688"/>
    <property type="gene ID" value="rrnAC0688"/>
</dbReference>
<dbReference type="GeneID" id="40151727"/>
<dbReference type="KEGG" id="hma:rrnAC0688"/>
<dbReference type="PATRIC" id="fig|272569.17.peg.1437"/>
<dbReference type="eggNOG" id="arCOG00774">
    <property type="taxonomic scope" value="Archaea"/>
</dbReference>
<dbReference type="eggNOG" id="arCOG00775">
    <property type="taxonomic scope" value="Archaea"/>
</dbReference>
<dbReference type="HOGENOM" id="CLU_777564_0_0_2"/>
<dbReference type="BioCyc" id="MetaCyc:MONOMER-16257"/>
<dbReference type="Proteomes" id="UP000001169">
    <property type="component" value="Chromosome I"/>
</dbReference>
<dbReference type="GO" id="GO:0016829">
    <property type="term" value="F:lyase activity"/>
    <property type="evidence" value="ECO:0007669"/>
    <property type="project" value="UniProtKB-KW"/>
</dbReference>
<dbReference type="CDD" id="cd03451">
    <property type="entry name" value="FkbR2"/>
    <property type="match status" value="1"/>
</dbReference>
<dbReference type="Gene3D" id="3.10.129.10">
    <property type="entry name" value="Hotdog Thioesterase"/>
    <property type="match status" value="2"/>
</dbReference>
<dbReference type="InterPro" id="IPR029069">
    <property type="entry name" value="HotDog_dom_sf"/>
</dbReference>
<dbReference type="InterPro" id="IPR048274">
    <property type="entry name" value="MC_hydratase"/>
</dbReference>
<dbReference type="InterPro" id="IPR045672">
    <property type="entry name" value="MC_hydratase_acr"/>
</dbReference>
<dbReference type="InterPro" id="IPR052342">
    <property type="entry name" value="MCH/BMMD"/>
</dbReference>
<dbReference type="NCBIfam" id="NF041625">
    <property type="entry name" value="methfumCoahyd_Halo"/>
    <property type="match status" value="1"/>
</dbReference>
<dbReference type="PANTHER" id="PTHR43664:SF1">
    <property type="entry name" value="BETA-METHYLMALYL-COA DEHYDRATASE"/>
    <property type="match status" value="1"/>
</dbReference>
<dbReference type="PANTHER" id="PTHR43664">
    <property type="entry name" value="MONOAMINE OXIDASE-RELATED"/>
    <property type="match status" value="1"/>
</dbReference>
<dbReference type="Pfam" id="PF19315">
    <property type="entry name" value="MC_hydratase"/>
    <property type="match status" value="1"/>
</dbReference>
<dbReference type="SUPFAM" id="SSF54637">
    <property type="entry name" value="Thioesterase/thiol ester dehydrase-isomerase"/>
    <property type="match status" value="2"/>
</dbReference>
<name>MCH_HALMA</name>
<accession>Q5V464</accession>